<protein>
    <recommendedName>
        <fullName evidence="1">Enolase</fullName>
        <ecNumber evidence="1">4.2.1.11</ecNumber>
    </recommendedName>
    <alternativeName>
        <fullName evidence="1">2-phospho-D-glycerate hydro-lyase</fullName>
    </alternativeName>
    <alternativeName>
        <fullName evidence="1">2-phosphoglycerate dehydratase</fullName>
    </alternativeName>
</protein>
<gene>
    <name evidence="1" type="primary">eno</name>
    <name type="ordered locus">MTH_43</name>
</gene>
<feature type="chain" id="PRO_0000134028" description="Enolase">
    <location>
        <begin position="1"/>
        <end position="416"/>
    </location>
</feature>
<feature type="active site" description="Proton donor" evidence="1">
    <location>
        <position position="200"/>
    </location>
</feature>
<feature type="active site" description="Proton acceptor" evidence="1">
    <location>
        <position position="333"/>
    </location>
</feature>
<feature type="binding site" evidence="1">
    <location>
        <position position="156"/>
    </location>
    <ligand>
        <name>(2R)-2-phosphoglycerate</name>
        <dbReference type="ChEBI" id="CHEBI:58289"/>
    </ligand>
</feature>
<feature type="binding site" evidence="1">
    <location>
        <position position="236"/>
    </location>
    <ligand>
        <name>Mg(2+)</name>
        <dbReference type="ChEBI" id="CHEBI:18420"/>
    </ligand>
</feature>
<feature type="binding site" evidence="1">
    <location>
        <position position="281"/>
    </location>
    <ligand>
        <name>Mg(2+)</name>
        <dbReference type="ChEBI" id="CHEBI:18420"/>
    </ligand>
</feature>
<feature type="binding site" evidence="1">
    <location>
        <position position="308"/>
    </location>
    <ligand>
        <name>Mg(2+)</name>
        <dbReference type="ChEBI" id="CHEBI:18420"/>
    </ligand>
</feature>
<feature type="binding site" evidence="1">
    <location>
        <position position="333"/>
    </location>
    <ligand>
        <name>(2R)-2-phosphoglycerate</name>
        <dbReference type="ChEBI" id="CHEBI:58289"/>
    </ligand>
</feature>
<feature type="binding site" evidence="1">
    <location>
        <position position="362"/>
    </location>
    <ligand>
        <name>(2R)-2-phosphoglycerate</name>
        <dbReference type="ChEBI" id="CHEBI:58289"/>
    </ligand>
</feature>
<feature type="binding site" evidence="1">
    <location>
        <position position="363"/>
    </location>
    <ligand>
        <name>(2R)-2-phosphoglycerate</name>
        <dbReference type="ChEBI" id="CHEBI:58289"/>
    </ligand>
</feature>
<feature type="binding site" evidence="1">
    <location>
        <position position="384"/>
    </location>
    <ligand>
        <name>(2R)-2-phosphoglycerate</name>
        <dbReference type="ChEBI" id="CHEBI:58289"/>
    </ligand>
</feature>
<name>ENO_METTH</name>
<proteinExistence type="inferred from homology"/>
<comment type="function">
    <text evidence="1">Catalyzes the reversible conversion of 2-phosphoglycerate (2-PG) into phosphoenolpyruvate (PEP). It is essential for the degradation of carbohydrates via glycolysis.</text>
</comment>
<comment type="catalytic activity">
    <reaction evidence="1">
        <text>(2R)-2-phosphoglycerate = phosphoenolpyruvate + H2O</text>
        <dbReference type="Rhea" id="RHEA:10164"/>
        <dbReference type="ChEBI" id="CHEBI:15377"/>
        <dbReference type="ChEBI" id="CHEBI:58289"/>
        <dbReference type="ChEBI" id="CHEBI:58702"/>
        <dbReference type="EC" id="4.2.1.11"/>
    </reaction>
</comment>
<comment type="cofactor">
    <cofactor evidence="1">
        <name>Mg(2+)</name>
        <dbReference type="ChEBI" id="CHEBI:18420"/>
    </cofactor>
    <text evidence="1">Binds a second Mg(2+) ion via substrate during catalysis.</text>
</comment>
<comment type="pathway">
    <text evidence="1">Carbohydrate degradation; glycolysis; pyruvate from D-glyceraldehyde 3-phosphate: step 4/5.</text>
</comment>
<comment type="subcellular location">
    <subcellularLocation>
        <location evidence="1">Cytoplasm</location>
    </subcellularLocation>
    <subcellularLocation>
        <location evidence="1">Secreted</location>
    </subcellularLocation>
    <subcellularLocation>
        <location evidence="1">Cell surface</location>
    </subcellularLocation>
    <text evidence="1">Fractions of enolase are present in both the cytoplasm and on the cell surface.</text>
</comment>
<comment type="similarity">
    <text evidence="1">Belongs to the enolase family.</text>
</comment>
<evidence type="ECO:0000255" key="1">
    <source>
        <dbReference type="HAMAP-Rule" id="MF_00318"/>
    </source>
</evidence>
<reference key="1">
    <citation type="journal article" date="1997" name="J. Bacteriol.">
        <title>Complete genome sequence of Methanobacterium thermoautotrophicum deltaH: functional analysis and comparative genomics.</title>
        <authorList>
            <person name="Smith D.R."/>
            <person name="Doucette-Stamm L.A."/>
            <person name="Deloughery C."/>
            <person name="Lee H.-M."/>
            <person name="Dubois J."/>
            <person name="Aldredge T."/>
            <person name="Bashirzadeh R."/>
            <person name="Blakely D."/>
            <person name="Cook R."/>
            <person name="Gilbert K."/>
            <person name="Harrison D."/>
            <person name="Hoang L."/>
            <person name="Keagle P."/>
            <person name="Lumm W."/>
            <person name="Pothier B."/>
            <person name="Qiu D."/>
            <person name="Spadafora R."/>
            <person name="Vicare R."/>
            <person name="Wang Y."/>
            <person name="Wierzbowski J."/>
            <person name="Gibson R."/>
            <person name="Jiwani N."/>
            <person name="Caruso A."/>
            <person name="Bush D."/>
            <person name="Safer H."/>
            <person name="Patwell D."/>
            <person name="Prabhakar S."/>
            <person name="McDougall S."/>
            <person name="Shimer G."/>
            <person name="Goyal A."/>
            <person name="Pietrovski S."/>
            <person name="Church G.M."/>
            <person name="Daniels C.J."/>
            <person name="Mao J.-I."/>
            <person name="Rice P."/>
            <person name="Noelling J."/>
            <person name="Reeve J.N."/>
        </authorList>
    </citation>
    <scope>NUCLEOTIDE SEQUENCE [LARGE SCALE GENOMIC DNA]</scope>
    <source>
        <strain>ATCC 29096 / DSM 1053 / JCM 10044 / NBRC 100330 / Delta H</strain>
    </source>
</reference>
<keyword id="KW-0963">Cytoplasm</keyword>
<keyword id="KW-0324">Glycolysis</keyword>
<keyword id="KW-0456">Lyase</keyword>
<keyword id="KW-0460">Magnesium</keyword>
<keyword id="KW-0479">Metal-binding</keyword>
<keyword id="KW-1185">Reference proteome</keyword>
<keyword id="KW-0964">Secreted</keyword>
<sequence length="416" mass="44941">MESIIEDVRVRKILDSRGNPTVEVDVITWNGFGRAAAPSGASTGSREVAAFPSGGVDEIITEVEDIISSELIGMDAVDLQDIDLVLKEIDGTENLSSLGGNTVVAVSMATAKAAASSYNMPLYRFLGGNLATSIPYPLGNMINGGAHAGKNAPDIQEFLVVPVGAEDITEAVFANAAVHKRIRELIQKKDPSFAGGKGDEGGWVPSLSNGDALEIQATACEEVTDELGVEVRPSLDLAASEFWDPEIEKYVYRQENVQKDTGEQIEFVKEIIETYDMYYVEDPLHEGDLEGFAELTSLVGDRCMICGDDIFVTNREILREGIEMGAANAIIIKPNQIGTLTDTYLTVKLALENRYTPVVSHRSGETTDDTIAHLAVAFGAPLIKTGAIGGERIAKLNELIRIQEEIPYSRMADLPF</sequence>
<dbReference type="EC" id="4.2.1.11" evidence="1"/>
<dbReference type="EMBL" id="AE000666">
    <property type="protein sequence ID" value="AAB84550.1"/>
    <property type="molecule type" value="Genomic_DNA"/>
</dbReference>
<dbReference type="PIR" id="A69156">
    <property type="entry name" value="A69156"/>
</dbReference>
<dbReference type="RefSeq" id="WP_010875683.1">
    <property type="nucleotide sequence ID" value="NC_000916.1"/>
</dbReference>
<dbReference type="SMR" id="O26149"/>
<dbReference type="FunCoup" id="O26149">
    <property type="interactions" value="191"/>
</dbReference>
<dbReference type="STRING" id="187420.MTH_43"/>
<dbReference type="PaxDb" id="187420-MTH_43"/>
<dbReference type="EnsemblBacteria" id="AAB84550">
    <property type="protein sequence ID" value="AAB84550"/>
    <property type="gene ID" value="MTH_43"/>
</dbReference>
<dbReference type="GeneID" id="82296542"/>
<dbReference type="KEGG" id="mth:MTH_43"/>
<dbReference type="PATRIC" id="fig|187420.15.peg.41"/>
<dbReference type="HOGENOM" id="CLU_031223_0_1_2"/>
<dbReference type="InParanoid" id="O26149"/>
<dbReference type="BioCyc" id="MetaCyc:MONOMER-14533"/>
<dbReference type="UniPathway" id="UPA00109">
    <property type="reaction ID" value="UER00187"/>
</dbReference>
<dbReference type="Proteomes" id="UP000005223">
    <property type="component" value="Chromosome"/>
</dbReference>
<dbReference type="GO" id="GO:0009986">
    <property type="term" value="C:cell surface"/>
    <property type="evidence" value="ECO:0007669"/>
    <property type="project" value="UniProtKB-SubCell"/>
</dbReference>
<dbReference type="GO" id="GO:0005576">
    <property type="term" value="C:extracellular region"/>
    <property type="evidence" value="ECO:0007669"/>
    <property type="project" value="UniProtKB-SubCell"/>
</dbReference>
<dbReference type="GO" id="GO:0000015">
    <property type="term" value="C:phosphopyruvate hydratase complex"/>
    <property type="evidence" value="ECO:0007669"/>
    <property type="project" value="InterPro"/>
</dbReference>
<dbReference type="GO" id="GO:0000287">
    <property type="term" value="F:magnesium ion binding"/>
    <property type="evidence" value="ECO:0007669"/>
    <property type="project" value="UniProtKB-UniRule"/>
</dbReference>
<dbReference type="GO" id="GO:0004634">
    <property type="term" value="F:phosphopyruvate hydratase activity"/>
    <property type="evidence" value="ECO:0007669"/>
    <property type="project" value="UniProtKB-UniRule"/>
</dbReference>
<dbReference type="GO" id="GO:0006096">
    <property type="term" value="P:glycolytic process"/>
    <property type="evidence" value="ECO:0007669"/>
    <property type="project" value="UniProtKB-UniRule"/>
</dbReference>
<dbReference type="CDD" id="cd03313">
    <property type="entry name" value="enolase"/>
    <property type="match status" value="1"/>
</dbReference>
<dbReference type="Gene3D" id="3.20.20.120">
    <property type="entry name" value="Enolase-like C-terminal domain"/>
    <property type="match status" value="1"/>
</dbReference>
<dbReference type="Gene3D" id="3.30.390.10">
    <property type="entry name" value="Enolase-like, N-terminal domain"/>
    <property type="match status" value="1"/>
</dbReference>
<dbReference type="HAMAP" id="MF_00318">
    <property type="entry name" value="Enolase"/>
    <property type="match status" value="1"/>
</dbReference>
<dbReference type="InterPro" id="IPR000941">
    <property type="entry name" value="Enolase"/>
</dbReference>
<dbReference type="InterPro" id="IPR036849">
    <property type="entry name" value="Enolase-like_C_sf"/>
</dbReference>
<dbReference type="InterPro" id="IPR029017">
    <property type="entry name" value="Enolase-like_N"/>
</dbReference>
<dbReference type="InterPro" id="IPR020810">
    <property type="entry name" value="Enolase_C"/>
</dbReference>
<dbReference type="InterPro" id="IPR020809">
    <property type="entry name" value="Enolase_CS"/>
</dbReference>
<dbReference type="InterPro" id="IPR020811">
    <property type="entry name" value="Enolase_N"/>
</dbReference>
<dbReference type="NCBIfam" id="TIGR01060">
    <property type="entry name" value="eno"/>
    <property type="match status" value="1"/>
</dbReference>
<dbReference type="PANTHER" id="PTHR11902">
    <property type="entry name" value="ENOLASE"/>
    <property type="match status" value="1"/>
</dbReference>
<dbReference type="PANTHER" id="PTHR11902:SF1">
    <property type="entry name" value="ENOLASE"/>
    <property type="match status" value="1"/>
</dbReference>
<dbReference type="Pfam" id="PF00113">
    <property type="entry name" value="Enolase_C"/>
    <property type="match status" value="1"/>
</dbReference>
<dbReference type="Pfam" id="PF03952">
    <property type="entry name" value="Enolase_N"/>
    <property type="match status" value="1"/>
</dbReference>
<dbReference type="PIRSF" id="PIRSF001400">
    <property type="entry name" value="Enolase"/>
    <property type="match status" value="1"/>
</dbReference>
<dbReference type="PRINTS" id="PR00148">
    <property type="entry name" value="ENOLASE"/>
</dbReference>
<dbReference type="SFLD" id="SFLDS00001">
    <property type="entry name" value="Enolase"/>
    <property type="match status" value="1"/>
</dbReference>
<dbReference type="SFLD" id="SFLDF00002">
    <property type="entry name" value="enolase"/>
    <property type="match status" value="1"/>
</dbReference>
<dbReference type="SMART" id="SM01192">
    <property type="entry name" value="Enolase_C"/>
    <property type="match status" value="1"/>
</dbReference>
<dbReference type="SMART" id="SM01193">
    <property type="entry name" value="Enolase_N"/>
    <property type="match status" value="1"/>
</dbReference>
<dbReference type="SUPFAM" id="SSF51604">
    <property type="entry name" value="Enolase C-terminal domain-like"/>
    <property type="match status" value="1"/>
</dbReference>
<dbReference type="SUPFAM" id="SSF54826">
    <property type="entry name" value="Enolase N-terminal domain-like"/>
    <property type="match status" value="1"/>
</dbReference>
<dbReference type="PROSITE" id="PS00164">
    <property type="entry name" value="ENOLASE"/>
    <property type="match status" value="1"/>
</dbReference>
<accession>O26149</accession>
<organism>
    <name type="scientific">Methanothermobacter thermautotrophicus (strain ATCC 29096 / DSM 1053 / JCM 10044 / NBRC 100330 / Delta H)</name>
    <name type="common">Methanobacterium thermoautotrophicum</name>
    <dbReference type="NCBI Taxonomy" id="187420"/>
    <lineage>
        <taxon>Archaea</taxon>
        <taxon>Methanobacteriati</taxon>
        <taxon>Methanobacteriota</taxon>
        <taxon>Methanomada group</taxon>
        <taxon>Methanobacteria</taxon>
        <taxon>Methanobacteriales</taxon>
        <taxon>Methanobacteriaceae</taxon>
        <taxon>Methanothermobacter</taxon>
    </lineage>
</organism>